<protein>
    <recommendedName>
        <fullName>Hemagglutinin-neuraminidase</fullName>
        <ecNumber evidence="9">3.2.1.18</ecNumber>
    </recommendedName>
</protein>
<keyword id="KW-0002">3D-structure</keyword>
<keyword id="KW-1015">Disulfide bond</keyword>
<keyword id="KW-0325">Glycoprotein</keyword>
<keyword id="KW-0348">Hemagglutinin</keyword>
<keyword id="KW-1032">Host cell membrane</keyword>
<keyword id="KW-1043">Host membrane</keyword>
<keyword id="KW-0945">Host-virus interaction</keyword>
<keyword id="KW-0378">Hydrolase</keyword>
<keyword id="KW-0472">Membrane</keyword>
<keyword id="KW-0735">Signal-anchor</keyword>
<keyword id="KW-0812">Transmembrane</keyword>
<keyword id="KW-1133">Transmembrane helix</keyword>
<keyword id="KW-1161">Viral attachment to host cell</keyword>
<keyword id="KW-0261">Viral envelope protein</keyword>
<keyword id="KW-0946">Virion</keyword>
<keyword id="KW-1160">Virus entry into host cell</keyword>
<name>HN_MUMPV</name>
<dbReference type="EC" id="3.2.1.18" evidence="9"/>
<dbReference type="EMBL" id="AB003414">
    <property type="protein sequence ID" value="BAA76983.1"/>
    <property type="molecule type" value="Genomic_RNA"/>
</dbReference>
<dbReference type="EMBL" id="AB470486">
    <property type="protein sequence ID" value="BAG84572.1"/>
    <property type="molecule type" value="Genomic_RNA"/>
</dbReference>
<dbReference type="EMBL" id="LC325483">
    <property type="protein sequence ID" value="BBA66873.1"/>
    <property type="molecule type" value="Viral_cRNA"/>
</dbReference>
<dbReference type="EMBL" id="LC325486">
    <property type="protein sequence ID" value="BBA66897.1"/>
    <property type="molecule type" value="Viral_cRNA"/>
</dbReference>
<dbReference type="PDB" id="5B2C">
    <property type="method" value="X-ray"/>
    <property type="resolution" value="2.24 A"/>
    <property type="chains" value="A/B=106-582"/>
</dbReference>
<dbReference type="PDB" id="5B2D">
    <property type="method" value="X-ray"/>
    <property type="resolution" value="2.18 A"/>
    <property type="chains" value="A/B=106-582"/>
</dbReference>
<dbReference type="PDB" id="6JJM">
    <property type="method" value="X-ray"/>
    <property type="resolution" value="2.05 A"/>
    <property type="chains" value="A/B=106-582"/>
</dbReference>
<dbReference type="PDB" id="6JJN">
    <property type="method" value="X-ray"/>
    <property type="resolution" value="2.50 A"/>
    <property type="chains" value="A/B=106-582"/>
</dbReference>
<dbReference type="PDBsum" id="5B2C"/>
<dbReference type="PDBsum" id="5B2D"/>
<dbReference type="PDBsum" id="6JJM"/>
<dbReference type="PDBsum" id="6JJN"/>
<dbReference type="SMR" id="Q9WAF5"/>
<dbReference type="Proteomes" id="UP000167557">
    <property type="component" value="Genome"/>
</dbReference>
<dbReference type="GO" id="GO:0020002">
    <property type="term" value="C:host cell plasma membrane"/>
    <property type="evidence" value="ECO:0007669"/>
    <property type="project" value="UniProtKB-SubCell"/>
</dbReference>
<dbReference type="GO" id="GO:0016020">
    <property type="term" value="C:membrane"/>
    <property type="evidence" value="ECO:0007669"/>
    <property type="project" value="UniProtKB-KW"/>
</dbReference>
<dbReference type="GO" id="GO:0019031">
    <property type="term" value="C:viral envelope"/>
    <property type="evidence" value="ECO:0007669"/>
    <property type="project" value="UniProtKB-KW"/>
</dbReference>
<dbReference type="GO" id="GO:0055036">
    <property type="term" value="C:virion membrane"/>
    <property type="evidence" value="ECO:0007669"/>
    <property type="project" value="UniProtKB-SubCell"/>
</dbReference>
<dbReference type="GO" id="GO:0004308">
    <property type="term" value="F:exo-alpha-sialidase activity"/>
    <property type="evidence" value="ECO:0007669"/>
    <property type="project" value="InterPro"/>
</dbReference>
<dbReference type="GO" id="GO:0046789">
    <property type="term" value="F:host cell surface receptor binding"/>
    <property type="evidence" value="ECO:0007669"/>
    <property type="project" value="InterPro"/>
</dbReference>
<dbReference type="GO" id="GO:0046718">
    <property type="term" value="P:symbiont entry into host cell"/>
    <property type="evidence" value="ECO:0007669"/>
    <property type="project" value="UniProtKB-KW"/>
</dbReference>
<dbReference type="GO" id="GO:0019062">
    <property type="term" value="P:virion attachment to host cell"/>
    <property type="evidence" value="ECO:0007669"/>
    <property type="project" value="UniProtKB-KW"/>
</dbReference>
<dbReference type="CDD" id="cd15469">
    <property type="entry name" value="HN"/>
    <property type="match status" value="1"/>
</dbReference>
<dbReference type="FunFam" id="2.120.10.10:FF:000004">
    <property type="entry name" value="Hemagglutinin-neuraminidase"/>
    <property type="match status" value="1"/>
</dbReference>
<dbReference type="Gene3D" id="1.20.5.110">
    <property type="match status" value="1"/>
</dbReference>
<dbReference type="Gene3D" id="2.120.10.10">
    <property type="match status" value="1"/>
</dbReference>
<dbReference type="InterPro" id="IPR016285">
    <property type="entry name" value="Hemagglutn-neuramid"/>
</dbReference>
<dbReference type="InterPro" id="IPR000665">
    <property type="entry name" value="Hemagglutn/HN"/>
</dbReference>
<dbReference type="InterPro" id="IPR036278">
    <property type="entry name" value="Sialidase_sf"/>
</dbReference>
<dbReference type="Pfam" id="PF00423">
    <property type="entry name" value="HN"/>
    <property type="match status" value="1"/>
</dbReference>
<dbReference type="PIRSF" id="PIRSF001072">
    <property type="entry name" value="Hemagglut-neuramid_paramyxoV"/>
    <property type="match status" value="1"/>
</dbReference>
<dbReference type="SUPFAM" id="SSF50939">
    <property type="entry name" value="Sialidases"/>
    <property type="match status" value="1"/>
</dbReference>
<organism>
    <name type="scientific">Mumps orthorubulavirus</name>
    <name type="common">MuV</name>
    <dbReference type="NCBI Taxonomy" id="2560602"/>
    <lineage>
        <taxon>Viruses</taxon>
        <taxon>Riboviria</taxon>
        <taxon>Orthornavirae</taxon>
        <taxon>Negarnaviricota</taxon>
        <taxon>Haploviricotina</taxon>
        <taxon>Monjiviricetes</taxon>
        <taxon>Mononegavirales</taxon>
        <taxon>Paramyxoviridae</taxon>
        <taxon>Rubulavirinae</taxon>
        <taxon>Orthorubulavirus</taxon>
        <taxon>Orthorubulavirus parotitidis</taxon>
    </lineage>
</organism>
<feature type="chain" id="PRO_0000462017" description="Hemagglutinin-neuraminidase">
    <location>
        <begin position="1"/>
        <end position="582"/>
    </location>
</feature>
<feature type="topological domain" description="Intravirion" evidence="5">
    <location>
        <begin position="1"/>
        <end position="34"/>
    </location>
</feature>
<feature type="transmembrane region" description="Helical" evidence="5">
    <location>
        <begin position="35"/>
        <end position="55"/>
    </location>
</feature>
<feature type="topological domain" description="Virion surface" evidence="5">
    <location>
        <begin position="56"/>
        <end position="582"/>
    </location>
</feature>
<feature type="site" description="Binding to the glycan motifs of the host receptor" evidence="6 7">
    <location>
        <position position="180"/>
    </location>
</feature>
<feature type="site" description="Binding to the glycan motifs of the host receptor" evidence="6 7">
    <location>
        <position position="242"/>
    </location>
</feature>
<feature type="site" description="Binding to the glycan motifs of the host receptor" evidence="6 7">
    <location>
        <position position="264"/>
    </location>
</feature>
<feature type="site" description="Binding to the glycan motifs of the host receptor" evidence="6 7">
    <location>
        <position position="323"/>
    </location>
</feature>
<feature type="site" description="Binding to the glycan motifs of the host receptor" evidence="7">
    <location>
        <position position="369"/>
    </location>
</feature>
<feature type="site" description="Binding to the glycan motifs of the host receptor" evidence="6 7">
    <location>
        <position position="407"/>
    </location>
</feature>
<feature type="site" description="Binding to the glycan motifs of the host receptor" evidence="6 7">
    <location>
        <position position="422"/>
    </location>
</feature>
<feature type="site" description="Binding to the glycan motifs of the host receptor" evidence="6 7">
    <location>
        <position position="512"/>
    </location>
</feature>
<feature type="site" description="Binding to the glycan motifs of the host receptor" evidence="6 7">
    <location>
        <position position="540"/>
    </location>
</feature>
<feature type="glycosylation site" description="N-linked (GlcNAc...) asparagine; by host" evidence="6 12 13">
    <location>
        <position position="284"/>
    </location>
</feature>
<feature type="glycosylation site" description="N-linked (GlcNAc...) asparagine; by host" evidence="6 13">
    <location>
        <position position="329"/>
    </location>
</feature>
<feature type="glycosylation site" description="N-linked (GlcNAc...) asparagine; by host" evidence="6 7 12 13 14 15">
    <location>
        <position position="400"/>
    </location>
</feature>
<feature type="glycosylation site" description="N-linked (GlcNAc...) asparagine; by host" evidence="6 12 13">
    <location>
        <position position="448"/>
    </location>
</feature>
<feature type="glycosylation site" description="N-linked (GlcNAc...) asparagine; by host" evidence="6 7 12 13 14 15">
    <location>
        <position position="507"/>
    </location>
</feature>
<feature type="disulfide bond" evidence="6 7 12 13 14 15">
    <location>
        <begin position="178"/>
        <end position="202"/>
    </location>
</feature>
<feature type="disulfide bond" evidence="6 7 12 13 14 15">
    <location>
        <begin position="192"/>
        <end position="253"/>
    </location>
</feature>
<feature type="disulfide bond" evidence="6 7 12 13 14 15">
    <location>
        <begin position="244"/>
        <end position="257"/>
    </location>
</feature>
<feature type="disulfide bond" evidence="6 7 12 13 14 15">
    <location>
        <begin position="350"/>
        <end position="471"/>
    </location>
</feature>
<feature type="disulfide bond" evidence="6 7 12 13 14 15">
    <location>
        <begin position="382"/>
        <end position="392"/>
    </location>
</feature>
<feature type="disulfide bond" evidence="6 7 12 13 14 15">
    <location>
        <begin position="465"/>
        <end position="475"/>
    </location>
</feature>
<feature type="disulfide bond" evidence="6 7 12 13 14 15">
    <location>
        <begin position="545"/>
        <end position="556"/>
    </location>
</feature>
<feature type="mutagenesis site" description="Loss of tetramer formation and participation in triggering fusion. No effect on the binding to the host receptor." evidence="8">
    <original>R</original>
    <variation>A</variation>
    <variation>K</variation>
    <location>
        <position position="139"/>
    </location>
</feature>
<feature type="mutagenesis site" description="Considerably reduces the cell-cell fusion mediated by HN and F proteins." evidence="6">
    <original>Y</original>
    <variation>A</variation>
    <location>
        <position position="369"/>
    </location>
</feature>
<accession>Q9WAF5</accession>
<sequence>MEPSKLFTMSDNATFAPGPVVNAADKKTFRTCFRILVLSVQAVTLILVIVTLGELVRMINDQGLSNQLSSIADKIRESATMIASAVGVMNQVIHGVTVSLPLQIEGNQNQLLSTLATIRTGKKQVSNCSTNIPLVNDLRFINGINKFIIEDYATHDFSIGHPLNMPSFIPTATSPNGCTRIPSFSLGKTHWCYTHNVINANCKDHTSSNQYISMGILVQTASGYPMFKTLKIQYLSDGLNRKSCSIATVPDGCAMYCYVSTQLETDDYAGSSPPTQKLTLLFYNDTVTERTISPTGLEGNWATLVPGVGSGIYFENKLIFPAYGGVLPNSTLGVKSAREFFRPVNPYNPCSGPQQDLDQRALRSYFPSYFSNRRVQSAFLVCAWNQILVTNCELVVPSNNQTLMGAEGRVLLINNRLLYYQRSTSWWPYELLYEISFTFTNSGQSSVNMSWIPIYSFTRPGSGNCSGENVCPTACVSGVYLDPWPLTPYSHQSGINRNFYFTGALLNSSTTRVNPTLYVSALNNLKVLAPYGNQGLFASYTTTTCFQDTGDASVYCVYIMELASNIVGEFQILPVLTRLTIT</sequence>
<comment type="function">
    <text evidence="2 6 7">Attaches the virus to alpha-2,3-linked sialic acid-containing cell receptors and thereby initiating infection (PubMed:27671656). Binding of HN protein to the receptor induces a conformational change that allows the F protein to trigger virion/cell membranes fusion (By similarity). Binds to the glycan motifs sialyl Lewis (SLe) and GM2 ganglioside (GM2-glycan) (PubMed:31118251).</text>
</comment>
<comment type="function">
    <text evidence="4">Neuraminidase activity ensures the efficient spread of the virus by dissociating the mature virions from the neuraminic acid containing glycoproteins.</text>
</comment>
<comment type="catalytic activity">
    <reaction evidence="9">
        <text>Hydrolysis of alpha-(2-&gt;3)-, alpha-(2-&gt;6)-, alpha-(2-&gt;8)- glycosidic linkages of terminal sialic acid residues in oligosaccharides, glycoproteins, glycolipids, colominic acid and synthetic substrates.</text>
        <dbReference type="EC" id="3.2.1.18"/>
    </reaction>
</comment>
<comment type="subunit">
    <text evidence="1 6 8">Homotetramer; composed of disulfide-linked homodimers (PubMed:27671656, PubMed:31619562). Interacts with F protein trimer (By similarity).</text>
</comment>
<comment type="subcellular location">
    <subcellularLocation>
        <location evidence="3">Virion membrane</location>
        <topology evidence="10">Single-pass type II membrane protein</topology>
    </subcellularLocation>
    <subcellularLocation>
        <location evidence="10">Host cell membrane</location>
        <topology evidence="10">Single-pass type II membrane protein</topology>
    </subcellularLocation>
</comment>
<comment type="domain">
    <text evidence="7">The C-terminus (head domain) is involved in binding the cellular receptor.</text>
</comment>
<comment type="similarity">
    <text evidence="10">Belongs to the paramyxoviruses hemagglutinin-neuraminidase family.</text>
</comment>
<gene>
    <name evidence="11" type="primary">HN</name>
</gene>
<evidence type="ECO:0000250" key="1">
    <source>
        <dbReference type="UniProtKB" id="P04853"/>
    </source>
</evidence>
<evidence type="ECO:0000250" key="2">
    <source>
        <dbReference type="UniProtKB" id="Q786F2"/>
    </source>
</evidence>
<evidence type="ECO:0000250" key="3">
    <source>
        <dbReference type="UniProtKB" id="Q8QV65"/>
    </source>
</evidence>
<evidence type="ECO:0000250" key="4">
    <source>
        <dbReference type="UniProtKB" id="Q91UL0"/>
    </source>
</evidence>
<evidence type="ECO:0000255" key="5"/>
<evidence type="ECO:0000269" key="6">
    <source>
    </source>
</evidence>
<evidence type="ECO:0000269" key="7">
    <source>
    </source>
</evidence>
<evidence type="ECO:0000269" key="8">
    <source>
    </source>
</evidence>
<evidence type="ECO:0000269" key="9">
    <source>
    </source>
</evidence>
<evidence type="ECO:0000305" key="10"/>
<evidence type="ECO:0000312" key="11">
    <source>
        <dbReference type="EMBL" id="BAG84572.1"/>
    </source>
</evidence>
<evidence type="ECO:0007744" key="12">
    <source>
        <dbReference type="PDB" id="5B2C"/>
    </source>
</evidence>
<evidence type="ECO:0007744" key="13">
    <source>
        <dbReference type="PDB" id="5B2D"/>
    </source>
</evidence>
<evidence type="ECO:0007744" key="14">
    <source>
        <dbReference type="PDB" id="6JJM"/>
    </source>
</evidence>
<evidence type="ECO:0007744" key="15">
    <source>
        <dbReference type="PDB" id="6JJN"/>
    </source>
</evidence>
<proteinExistence type="evidence at protein level"/>
<reference key="1">
    <citation type="journal article" date="1999" name="Arch. Virol.">
        <title>Sequence analysis of F, SH, and HN genes among mumps virus strains in Japan.</title>
        <authorList>
            <person name="Kashiwagi Y."/>
            <person name="Takami T."/>
            <person name="Mori T."/>
            <person name="Nakayama T."/>
        </authorList>
    </citation>
    <scope>NUCLEOTIDE SEQUENCE [GENOMIC RNA]</scope>
    <source>
        <strain>Hoshino vaccine</strain>
    </source>
</reference>
<reference key="2">
    <citation type="journal article" date="2009" name="Vaccine">
        <title>Amino acid substitution at position 464 in the haemagglutinin-neuraminidase protein of a mumps virus Urabe strain enhanced the virus growth in neuroblastoma SH-SY5Y cells.</title>
        <authorList>
            <person name="Ninomiya K."/>
            <person name="Kanayama T."/>
            <person name="Fujieda N."/>
            <person name="Nakayama T."/>
            <person name="Komase K."/>
            <person name="Nagata K."/>
            <person name="Takeuchi K."/>
        </authorList>
    </citation>
    <scope>NUCLEOTIDE SEQUENCE [GENOMIC RNA]</scope>
    <source>
        <strain>Hoshino vaccine</strain>
    </source>
</reference>
<reference key="3">
    <citation type="submission" date="2017-09" db="EMBL/GenBank/DDBJ databases">
        <title>Detection of Mumps rubulavirus Tokyo, Japan.</title>
        <authorList>
            <person name="Hasegawa M."/>
            <person name="Okazaki T."/>
            <person name="Sakamoto T."/>
            <person name="Murata R."/>
            <person name="Nagashima M."/>
            <person name="Shinakai T."/>
            <person name="Sadamasu K."/>
        </authorList>
    </citation>
    <scope>NUCLEOTIDE SEQUENCE [GENOMIC RNA]</scope>
    <source>
        <strain>31170170</strain>
        <strain>31170197</strain>
    </source>
</reference>
<reference key="4">
    <citation type="journal article" date="2020" name="J. Virol.">
        <title>Disruption of the Dimer-Dimer Interaction of the Mumps Virus Attachment Protein Head Domain, Aided by an Anion Located at the Interface, Compromises Membrane Fusion Triggering.</title>
        <authorList>
            <person name="Kubota M."/>
            <person name="Okabe I."/>
            <person name="Nakakita S.I."/>
            <person name="Ueo A."/>
            <person name="Shirogane Y."/>
            <person name="Yanagi Y."/>
            <person name="Hashiguchi T."/>
        </authorList>
    </citation>
    <scope>SUBUNIT</scope>
    <scope>MUTAGENESIS OF ARG-139</scope>
</reference>
<reference key="5">
    <citation type="journal article" date="2022" name="Viruses">
        <title>Exploring the Mumps Virus Glycoproteins: A Review.</title>
        <authorList>
            <person name="Frost J.R."/>
            <person name="Shaikh S."/>
            <person name="Severini A."/>
        </authorList>
    </citation>
    <scope>REVIEW</scope>
</reference>
<reference key="6">
    <citation type="journal article" date="2024" name="Glycobiology">
        <title>Novel sialidase inhibitors suppress mumps virus replication and infection.</title>
        <authorList>
            <person name="Takahashi T."/>
            <person name="Kurebayashi Y."/>
            <person name="Otsubo T."/>
            <person name="Ikeda K."/>
            <person name="Konagaya K."/>
            <person name="Suzuki S."/>
            <person name="Yamazaki M."/>
            <person name="Suzuki K."/>
            <person name="Narimichi Y."/>
            <person name="Minami A."/>
            <person name="Takeuchi H."/>
        </authorList>
    </citation>
    <scope>CATALYTIC ACTIVITY</scope>
    <source>
        <strain>13V165E2</strain>
    </source>
</reference>
<reference evidence="12 13" key="7">
    <citation type="journal article" date="2016" name="Proc. Natl. Acad. Sci. U.S.A.">
        <title>Trisaccharide containing alpha2,3-linked sialic acid is a receptor for mumps virus.</title>
        <authorList>
            <person name="Kubota M."/>
            <person name="Takeuchi K."/>
            <person name="Watanabe S."/>
            <person name="Ohno S."/>
            <person name="Matsuoka R."/>
            <person name="Kohda D."/>
            <person name="Nakakita S.I."/>
            <person name="Hiramatsu H."/>
            <person name="Suzuki Y."/>
            <person name="Nakayama T."/>
            <person name="Terada T."/>
            <person name="Shimizu K."/>
            <person name="Shimizu N."/>
            <person name="Shiroishi M."/>
            <person name="Yanagi Y."/>
            <person name="Hashiguchi T."/>
        </authorList>
    </citation>
    <scope>X-RAY CRYSTALLOGRAPHY (2.18 ANGSTROMS) OF 106-582</scope>
    <scope>GLYCOSYLATION AT ASN-284; ASN-329; ASN-400; ASN-448 AND ASN-507</scope>
    <scope>DISULFIDE BONDS</scope>
    <scope>FUNCTION</scope>
    <scope>SUBUNIT</scope>
    <scope>MUTAGENESIS OF TYR-369</scope>
</reference>
<reference evidence="14 15" key="8">
    <citation type="journal article" date="2019" name="J. Virol.">
        <title>Molecular Mechanism of the Flexible Glycan Receptor Recognition by Mumps Virus.</title>
        <authorList>
            <person name="Kubota M."/>
            <person name="Matsuoka R."/>
            <person name="Suzuki T."/>
            <person name="Yonekura K."/>
            <person name="Yanagi Y."/>
            <person name="Hashiguchi T."/>
        </authorList>
    </citation>
    <scope>X-RAY CRYSTALLOGRAPHY (2.05 ANGSTROMS) OF 106-582</scope>
    <scope>GLYCOSYLATION AT ASN-400 AND ASN-507</scope>
    <scope>DISULFIDE BONDS</scope>
    <scope>FUNCTION</scope>
    <scope>DOMAIN</scope>
</reference>